<sequence>MKFLILNCLILFSLISSEATNVKLDREDQNHLVLLNEKNFEKLTQASTGATTGTWFVKFYAPWCSHCRKMAPAWESLAKALKGQVNVADVDVTRNLNLGKRFQIRGYPTLLLFHKGKMYQYEGGERTVEKLSEFALGDFKNAVGAPVPQPLSLFALVSDFVVSGVNEALRVYDAALAGFVTISSFSFLFGLLVGLMLSLFLFTRRATRKPKVLTERKKDK</sequence>
<dbReference type="EMBL" id="AJ300678">
    <property type="protein sequence ID" value="CAC83099.1"/>
    <property type="status" value="ALT_INIT"/>
    <property type="molecule type" value="mRNA"/>
</dbReference>
<dbReference type="EMBL" id="AAGK01000002">
    <property type="protein sequence ID" value="EAN32885.1"/>
    <property type="molecule type" value="Genomic_DNA"/>
</dbReference>
<dbReference type="RefSeq" id="XP_765168.1">
    <property type="nucleotide sequence ID" value="XM_760075.1"/>
</dbReference>
<dbReference type="SMR" id="Q4N4N8"/>
<dbReference type="FunCoup" id="Q4N4N8">
    <property type="interactions" value="41"/>
</dbReference>
<dbReference type="STRING" id="5875.Q4N4N8"/>
<dbReference type="EnsemblProtists" id="EAN32885">
    <property type="protein sequence ID" value="EAN32885"/>
    <property type="gene ID" value="TP02_0602"/>
</dbReference>
<dbReference type="GeneID" id="3501428"/>
<dbReference type="KEGG" id="tpv:TP02_0602"/>
<dbReference type="VEuPathDB" id="PiroplasmaDB:TpMuguga_02g00602"/>
<dbReference type="eggNOG" id="KOG0191">
    <property type="taxonomic scope" value="Eukaryota"/>
</dbReference>
<dbReference type="InParanoid" id="Q4N4N8"/>
<dbReference type="OMA" id="KAISKTW"/>
<dbReference type="Proteomes" id="UP000001949">
    <property type="component" value="Unassembled WGS sequence"/>
</dbReference>
<dbReference type="GO" id="GO:0005788">
    <property type="term" value="C:endoplasmic reticulum lumen"/>
    <property type="evidence" value="ECO:0007669"/>
    <property type="project" value="TreeGrafter"/>
</dbReference>
<dbReference type="GO" id="GO:0005789">
    <property type="term" value="C:endoplasmic reticulum membrane"/>
    <property type="evidence" value="ECO:0007669"/>
    <property type="project" value="UniProtKB-SubCell"/>
</dbReference>
<dbReference type="GO" id="GO:0015035">
    <property type="term" value="F:protein-disulfide reductase activity"/>
    <property type="evidence" value="ECO:0007669"/>
    <property type="project" value="TreeGrafter"/>
</dbReference>
<dbReference type="GO" id="GO:0034976">
    <property type="term" value="P:response to endoplasmic reticulum stress"/>
    <property type="evidence" value="ECO:0007669"/>
    <property type="project" value="TreeGrafter"/>
</dbReference>
<dbReference type="CDD" id="cd02961">
    <property type="entry name" value="PDI_a_family"/>
    <property type="match status" value="1"/>
</dbReference>
<dbReference type="Gene3D" id="3.40.30.10">
    <property type="entry name" value="Glutaredoxin"/>
    <property type="match status" value="1"/>
</dbReference>
<dbReference type="InterPro" id="IPR036249">
    <property type="entry name" value="Thioredoxin-like_sf"/>
</dbReference>
<dbReference type="InterPro" id="IPR013766">
    <property type="entry name" value="Thioredoxin_domain"/>
</dbReference>
<dbReference type="PANTHER" id="PTHR45815">
    <property type="entry name" value="PROTEIN DISULFIDE-ISOMERASE A6"/>
    <property type="match status" value="1"/>
</dbReference>
<dbReference type="PANTHER" id="PTHR45815:SF3">
    <property type="entry name" value="PROTEIN DISULFIDE-ISOMERASE A6"/>
    <property type="match status" value="1"/>
</dbReference>
<dbReference type="Pfam" id="PF00085">
    <property type="entry name" value="Thioredoxin"/>
    <property type="match status" value="1"/>
</dbReference>
<dbReference type="PRINTS" id="PR00421">
    <property type="entry name" value="THIOREDOXIN"/>
</dbReference>
<dbReference type="SUPFAM" id="SSF52833">
    <property type="entry name" value="Thioredoxin-like"/>
    <property type="match status" value="1"/>
</dbReference>
<dbReference type="PROSITE" id="PS51352">
    <property type="entry name" value="THIOREDOXIN_2"/>
    <property type="match status" value="1"/>
</dbReference>
<feature type="signal peptide" evidence="3">
    <location>
        <begin position="1"/>
        <end position="19"/>
    </location>
</feature>
<feature type="chain" id="PRO_0000390500" description="Thioredoxin domain-containing protein" evidence="3">
    <location>
        <begin position="20"/>
        <end position="220"/>
    </location>
</feature>
<feature type="topological domain" description="Lumenal" evidence="3">
    <location>
        <begin position="20"/>
        <end position="181"/>
    </location>
</feature>
<feature type="transmembrane region" description="Helical" evidence="3">
    <location>
        <begin position="182"/>
        <end position="202"/>
    </location>
</feature>
<feature type="topological domain" description="Cytoplasmic" evidence="3">
    <location>
        <begin position="203"/>
        <end position="220"/>
    </location>
</feature>
<feature type="domain" description="Thioredoxin" evidence="4 7">
    <location>
        <begin position="20"/>
        <end position="141"/>
    </location>
</feature>
<feature type="short sequence motif" description="Di-lysine motif" evidence="2">
    <location>
        <begin position="217"/>
        <end position="220"/>
    </location>
</feature>
<feature type="disulfide bond" description="Redox-active" evidence="4">
    <location>
        <begin position="64"/>
        <end position="67"/>
    </location>
</feature>
<gene>
    <name type="ordered locus">TP02_0602</name>
</gene>
<comment type="subcellular location">
    <subcellularLocation>
        <location evidence="5">Endoplasmic reticulum membrane</location>
        <topology evidence="5">Single-pass type I membrane protein</topology>
    </subcellularLocation>
</comment>
<comment type="developmental stage">
    <text evidence="5">Expressed in schizonts (at protein level).</text>
</comment>
<comment type="domain">
    <text evidence="1">The di-lysine motif confers endoplasmic reticulum localization for type I membrane proteins.</text>
</comment>
<comment type="similarity">
    <text evidence="3">Belongs to the protein disulfide isomerase family.</text>
</comment>
<comment type="sequence caution" evidence="7">
    <conflict type="erroneous initiation">
        <sequence resource="EMBL-CDS" id="CAC83099"/>
    </conflict>
</comment>
<name>TXND_THEPA</name>
<keyword id="KW-1015">Disulfide bond</keyword>
<keyword id="KW-0256">Endoplasmic reticulum</keyword>
<keyword id="KW-0472">Membrane</keyword>
<keyword id="KW-0676">Redox-active center</keyword>
<keyword id="KW-1185">Reference proteome</keyword>
<keyword id="KW-0732">Signal</keyword>
<keyword id="KW-0812">Transmembrane</keyword>
<keyword id="KW-1133">Transmembrane helix</keyword>
<evidence type="ECO:0000250" key="1">
    <source>
        <dbReference type="UniProtKB" id="P68978"/>
    </source>
</evidence>
<evidence type="ECO:0000250" key="2">
    <source>
        <dbReference type="UniProtKB" id="Q2TBU2"/>
    </source>
</evidence>
<evidence type="ECO:0000255" key="3"/>
<evidence type="ECO:0000255" key="4">
    <source>
        <dbReference type="PROSITE-ProRule" id="PRU00691"/>
    </source>
</evidence>
<evidence type="ECO:0000269" key="5">
    <source>
    </source>
</evidence>
<evidence type="ECO:0000303" key="6">
    <source>
    </source>
</evidence>
<evidence type="ECO:0000305" key="7"/>
<evidence type="ECO:0000312" key="8">
    <source>
        <dbReference type="EMBL" id="CAC83099.1"/>
    </source>
</evidence>
<evidence type="ECO:0000312" key="9">
    <source>
        <dbReference type="EMBL" id="EAN32885.1"/>
    </source>
</evidence>
<protein>
    <recommendedName>
        <fullName>Thioredoxin domain-containing protein</fullName>
    </recommendedName>
    <alternativeName>
        <fullName evidence="6">Membrane protein 23</fullName>
        <shortName evidence="6">mp23</shortName>
    </alternativeName>
</protein>
<reference evidence="7 8" key="1">
    <citation type="journal article" date="2002" name="Mol. Biochem. Parasitol.">
        <title>mp23, a Theileria parva transmembrane protein with homology to the protein disulfide isomerase family.</title>
        <authorList>
            <person name="Ebel T."/>
            <person name="Bender K."/>
            <person name="Bocskor U."/>
            <person name="Binder B.R."/>
            <person name="Lipp J."/>
        </authorList>
    </citation>
    <scope>NUCLEOTIDE SEQUENCE [MRNA]</scope>
    <scope>DEVELOPMENTAL STAGE</scope>
    <scope>SUBCELLULAR LOCATION</scope>
</reference>
<reference evidence="9" key="2">
    <citation type="journal article" date="2005" name="Science">
        <title>Genome sequence of Theileria parva, a bovine pathogen that transforms lymphocytes.</title>
        <authorList>
            <person name="Gardner M.J."/>
            <person name="Bishop R."/>
            <person name="Shah T."/>
            <person name="de Villiers E.P."/>
            <person name="Carlton J.M."/>
            <person name="Hall N."/>
            <person name="Ren Q."/>
            <person name="Paulsen I.T."/>
            <person name="Pain A."/>
            <person name="Berriman M."/>
            <person name="Wilson R.J.M."/>
            <person name="Sato S."/>
            <person name="Ralph S.A."/>
            <person name="Mann D.J."/>
            <person name="Xiong Z."/>
            <person name="Shallom S.J."/>
            <person name="Weidman J."/>
            <person name="Jiang L."/>
            <person name="Lynn J."/>
            <person name="Weaver B."/>
            <person name="Shoaibi A."/>
            <person name="Domingo A.R."/>
            <person name="Wasawo D."/>
            <person name="Crabtree J."/>
            <person name="Wortman J.R."/>
            <person name="Haas B."/>
            <person name="Angiuoli S.V."/>
            <person name="Creasy T.H."/>
            <person name="Lu C."/>
            <person name="Suh B."/>
            <person name="Silva J.C."/>
            <person name="Utterback T.R."/>
            <person name="Feldblyum T.V."/>
            <person name="Pertea M."/>
            <person name="Allen J."/>
            <person name="Nierman W.C."/>
            <person name="Taracha E.L.N."/>
            <person name="Salzberg S.L."/>
            <person name="White O.R."/>
            <person name="Fitzhugh H.A."/>
            <person name="Morzaria S."/>
            <person name="Venter J.C."/>
            <person name="Fraser C.M."/>
            <person name="Nene V."/>
        </authorList>
    </citation>
    <scope>NUCLEOTIDE SEQUENCE [LARGE SCALE GENOMIC DNA]</scope>
    <source>
        <strain>Muguga</strain>
    </source>
</reference>
<proteinExistence type="evidence at protein level"/>
<organism>
    <name type="scientific">Theileria parva</name>
    <name type="common">East coast fever infection agent</name>
    <dbReference type="NCBI Taxonomy" id="5875"/>
    <lineage>
        <taxon>Eukaryota</taxon>
        <taxon>Sar</taxon>
        <taxon>Alveolata</taxon>
        <taxon>Apicomplexa</taxon>
        <taxon>Aconoidasida</taxon>
        <taxon>Piroplasmida</taxon>
        <taxon>Theileriidae</taxon>
        <taxon>Theileria</taxon>
    </lineage>
</organism>
<accession>Q4N4N8</accession>
<accession>Q8WPN8</accession>